<name>DLAG_AMYME</name>
<organism>
    <name type="scientific">Amycolatopsis methanolica</name>
    <dbReference type="NCBI Taxonomy" id="1814"/>
    <lineage>
        <taxon>Bacteria</taxon>
        <taxon>Bacillati</taxon>
        <taxon>Actinomycetota</taxon>
        <taxon>Actinomycetes</taxon>
        <taxon>Pseudonocardiales</taxon>
        <taxon>Pseudonocardiaceae</taxon>
        <taxon>Amycolatopsis</taxon>
        <taxon>Amycolatopsis methanolica group</taxon>
    </lineage>
</organism>
<proteinExistence type="evidence at protein level"/>
<evidence type="ECO:0000269" key="1">
    <source>
    </source>
</evidence>
<feature type="chain" id="PRO_0000079927" description="DYE-linked aldehyde dehydrogenase, gamma chain">
    <location>
        <begin position="1"/>
        <end position="21" status="greater than"/>
    </location>
</feature>
<feature type="non-terminal residue">
    <location>
        <position position="21"/>
    </location>
</feature>
<protein>
    <recommendedName>
        <fullName>DYE-linked aldehyde dehydrogenase, gamma chain</fullName>
        <shortName>DL-ALDH</shortName>
        <ecNumber>1.2.99.-</ecNumber>
    </recommendedName>
</protein>
<keyword id="KW-0001">2Fe-2S</keyword>
<keyword id="KW-0903">Direct protein sequencing</keyword>
<keyword id="KW-0408">Iron</keyword>
<keyword id="KW-0411">Iron-sulfur</keyword>
<keyword id="KW-0479">Metal-binding</keyword>
<keyword id="KW-0560">Oxidoreductase</keyword>
<sequence>MKVSIEINGTTVSXEVXDRTL</sequence>
<comment type="function">
    <text evidence="1">Active with aldehydes and formate esters as substrates.</text>
</comment>
<comment type="cofactor">
    <cofactor evidence="1">
        <name>[2Fe-2S] cluster</name>
        <dbReference type="ChEBI" id="CHEBI:190135"/>
    </cofactor>
    <text evidence="1">Binds 2 [2Fe-2S] clusters per subunit.</text>
</comment>
<comment type="subunit">
    <text>Heterotetramer composed of an alpha, a beta and two gamma chains.</text>
</comment>
<reference key="1">
    <citation type="journal article" date="1996" name="Arch. Biochem. Biophys.">
        <title>A second molybdoprotein aldehyde dehydrogenase from Amycolatopsis methanolica NCIB 11946.</title>
        <authorList>
            <person name="Kim S.W."/>
            <person name="Luykx D.M.A.M."/>
            <person name="de Vries S."/>
            <person name="Duine J.A."/>
        </authorList>
    </citation>
    <scope>PROTEIN SEQUENCE</scope>
    <scope>FUNCTION</scope>
    <scope>COFACTOR</scope>
    <source>
        <strain>DSM 44096 / JCM 8087 / NBRC 15065 / NCIMB 11946 / NRRL B-24139 / LMD 80.32 / 239</strain>
    </source>
</reference>
<accession>P80414</accession>
<dbReference type="EC" id="1.2.99.-"/>
<dbReference type="GO" id="GO:0051537">
    <property type="term" value="F:2 iron, 2 sulfur cluster binding"/>
    <property type="evidence" value="ECO:0007669"/>
    <property type="project" value="UniProtKB-KW"/>
</dbReference>
<dbReference type="GO" id="GO:0046872">
    <property type="term" value="F:metal ion binding"/>
    <property type="evidence" value="ECO:0007669"/>
    <property type="project" value="UniProtKB-KW"/>
</dbReference>
<dbReference type="GO" id="GO:0016491">
    <property type="term" value="F:oxidoreductase activity"/>
    <property type="evidence" value="ECO:0007669"/>
    <property type="project" value="UniProtKB-KW"/>
</dbReference>